<evidence type="ECO:0000269" key="1">
    <source>
    </source>
</evidence>
<evidence type="ECO:0000269" key="2">
    <source>
    </source>
</evidence>
<evidence type="ECO:0000303" key="3">
    <source>
    </source>
</evidence>
<evidence type="ECO:0000303" key="4">
    <source>
    </source>
</evidence>
<evidence type="ECO:0000305" key="5"/>
<evidence type="ECO:0000305" key="6">
    <source>
    </source>
</evidence>
<evidence type="ECO:0000305" key="7">
    <source>
    </source>
</evidence>
<evidence type="ECO:0007744" key="8">
    <source>
    </source>
</evidence>
<evidence type="ECO:0007829" key="9">
    <source>
        <dbReference type="PDB" id="6EM3"/>
    </source>
</evidence>
<proteinExistence type="evidence at protein level"/>
<feature type="initiator methionine" description="Removed" evidence="1">
    <location>
        <position position="1"/>
    </location>
</feature>
<feature type="chain" id="PRO_0000131145" description="Large ribosomal subunit protein eL32">
    <location>
        <begin position="2"/>
        <end position="130"/>
    </location>
</feature>
<feature type="modified residue" description="Phosphoserine" evidence="8">
    <location>
        <position position="40"/>
    </location>
</feature>
<feature type="turn" evidence="9">
    <location>
        <begin position="20"/>
        <end position="24"/>
    </location>
</feature>
<feature type="strand" evidence="9">
    <location>
        <begin position="26"/>
        <end position="28"/>
    </location>
</feature>
<feature type="turn" evidence="9">
    <location>
        <begin position="41"/>
        <end position="45"/>
    </location>
</feature>
<feature type="helix" evidence="9">
    <location>
        <begin position="55"/>
        <end position="57"/>
    </location>
</feature>
<feature type="helix" evidence="9">
    <location>
        <begin position="61"/>
        <end position="63"/>
    </location>
</feature>
<feature type="strand" evidence="9">
    <location>
        <begin position="64"/>
        <end position="66"/>
    </location>
</feature>
<feature type="strand" evidence="9">
    <location>
        <begin position="72"/>
        <end position="76"/>
    </location>
</feature>
<feature type="helix" evidence="9">
    <location>
        <begin position="79"/>
        <end position="82"/>
    </location>
</feature>
<feature type="turn" evidence="9">
    <location>
        <begin position="83"/>
        <end position="86"/>
    </location>
</feature>
<feature type="turn" evidence="9">
    <location>
        <begin position="89"/>
        <end position="91"/>
    </location>
</feature>
<feature type="strand" evidence="9">
    <location>
        <begin position="92"/>
        <end position="96"/>
    </location>
</feature>
<feature type="helix" evidence="9">
    <location>
        <begin position="102"/>
        <end position="115"/>
    </location>
</feature>
<feature type="strand" evidence="9">
    <location>
        <begin position="119"/>
        <end position="121"/>
    </location>
</feature>
<feature type="strand" evidence="9">
    <location>
        <begin position="124"/>
        <end position="127"/>
    </location>
</feature>
<comment type="function">
    <text evidence="6">Component of the ribosome, a large ribonucleoprotein complex responsible for the synthesis of proteins in the cell. The small ribosomal subunit (SSU) binds messenger RNAs (mRNAs) and translates the encoded message by selecting cognate aminoacyl-transfer RNA (tRNA) molecules. The large subunit (LSU) contains the ribosomal catalytic site termed the peptidyl transferase center (PTC), which catalyzes the formation of peptide bonds, thereby polymerizing the amino acids delivered by tRNAs into a polypeptide chain. The nascent polypeptides leave the ribosome through a tunnel in the LSU and interact with protein factors that function in enzymatic processing, targeting, and the membrane insertion of nascent chains at the exit of the ribosomal tunnel.</text>
</comment>
<comment type="subunit">
    <text evidence="2 7">Component of the large ribosomal subunit (LSU). Mature yeast ribosomes consist of a small (40S) and a large (60S) subunit. The 40S small subunit contains 1 molecule of ribosomal RNA (18S rRNA) and 33 different proteins (encoded by 57 genes). The large 60S subunit contains 3 rRNA molecules (25S, 5.8S and 5S rRNA) and 46 different proteins (encoded by 81 genes) (PubMed:22096102, PubMed:9559554).</text>
</comment>
<comment type="subcellular location">
    <subcellularLocation>
        <location evidence="2">Cytoplasm</location>
    </subcellularLocation>
</comment>
<comment type="similarity">
    <text evidence="5">Belongs to the eukaryotic ribosomal protein eL32 family.</text>
</comment>
<sequence>MASLPHPKIVKKHTKKFKRHHSDRYHRVAENWRKQKGIDSVVRRRFRGNISQPKIGYGSNKKTKFLSPSGHKTFLVANVKDLETLTMHTKTYAAEIAHNISAKNRVVILARAKALGIKVTNPKGRLALEA</sequence>
<gene>
    <name evidence="4" type="primary">RPL32</name>
    <name type="ordered locus">YBL092W</name>
    <name type="ORF">YBL0838</name>
</gene>
<name>RL32_YEAST</name>
<protein>
    <recommendedName>
        <fullName evidence="3">Large ribosomal subunit protein eL32</fullName>
    </recommendedName>
    <alternativeName>
        <fullName evidence="4">60S ribosomal protein L32</fullName>
    </alternativeName>
</protein>
<dbReference type="EMBL" id="X79489">
    <property type="protein sequence ID" value="CAA56010.1"/>
    <property type="molecule type" value="Genomic_DNA"/>
</dbReference>
<dbReference type="EMBL" id="Z35853">
    <property type="protein sequence ID" value="CAA84914.1"/>
    <property type="molecule type" value="Genomic_DNA"/>
</dbReference>
<dbReference type="EMBL" id="AY558291">
    <property type="protein sequence ID" value="AAS56617.1"/>
    <property type="molecule type" value="Genomic_DNA"/>
</dbReference>
<dbReference type="EMBL" id="EF123124">
    <property type="protein sequence ID" value="ABM97468.1"/>
    <property type="molecule type" value="mRNA"/>
</dbReference>
<dbReference type="EMBL" id="BK006936">
    <property type="protein sequence ID" value="DAA07031.1"/>
    <property type="molecule type" value="Genomic_DNA"/>
</dbReference>
<dbReference type="PIR" id="S45410">
    <property type="entry name" value="S45410"/>
</dbReference>
<dbReference type="RefSeq" id="NP_009460.1">
    <property type="nucleotide sequence ID" value="NM_001178332.1"/>
</dbReference>
<dbReference type="PDB" id="3J6X">
    <property type="method" value="EM"/>
    <property type="resolution" value="6.10 A"/>
    <property type="chains" value="72=1-130"/>
</dbReference>
<dbReference type="PDB" id="3J6Y">
    <property type="method" value="EM"/>
    <property type="resolution" value="6.10 A"/>
    <property type="chains" value="72=1-130"/>
</dbReference>
<dbReference type="PDB" id="3J77">
    <property type="method" value="EM"/>
    <property type="resolution" value="6.20 A"/>
    <property type="chains" value="82=1-130"/>
</dbReference>
<dbReference type="PDB" id="3J78">
    <property type="method" value="EM"/>
    <property type="resolution" value="6.30 A"/>
    <property type="chains" value="82=1-130"/>
</dbReference>
<dbReference type="PDB" id="3JCT">
    <property type="method" value="EM"/>
    <property type="resolution" value="3.08 A"/>
    <property type="chains" value="e=1-130"/>
</dbReference>
<dbReference type="PDB" id="4U3M">
    <property type="method" value="X-ray"/>
    <property type="resolution" value="3.00 A"/>
    <property type="chains" value="O2/o2=2-130"/>
</dbReference>
<dbReference type="PDB" id="4U3N">
    <property type="method" value="X-ray"/>
    <property type="resolution" value="3.20 A"/>
    <property type="chains" value="O2/o2=2-130"/>
</dbReference>
<dbReference type="PDB" id="4U3U">
    <property type="method" value="X-ray"/>
    <property type="resolution" value="2.90 A"/>
    <property type="chains" value="O2/o2=2-130"/>
</dbReference>
<dbReference type="PDB" id="4U4N">
    <property type="method" value="X-ray"/>
    <property type="resolution" value="3.10 A"/>
    <property type="chains" value="O2/o2=2-130"/>
</dbReference>
<dbReference type="PDB" id="4U4O">
    <property type="method" value="X-ray"/>
    <property type="resolution" value="3.60 A"/>
    <property type="chains" value="O2/o2=2-130"/>
</dbReference>
<dbReference type="PDB" id="4U4Q">
    <property type="method" value="X-ray"/>
    <property type="resolution" value="3.00 A"/>
    <property type="chains" value="O2/o2=2-130"/>
</dbReference>
<dbReference type="PDB" id="4U4R">
    <property type="method" value="X-ray"/>
    <property type="resolution" value="2.80 A"/>
    <property type="chains" value="O2/o2=2-130"/>
</dbReference>
<dbReference type="PDB" id="4U4U">
    <property type="method" value="X-ray"/>
    <property type="resolution" value="3.00 A"/>
    <property type="chains" value="O2/o2=2-130"/>
</dbReference>
<dbReference type="PDB" id="4U4Y">
    <property type="method" value="X-ray"/>
    <property type="resolution" value="3.20 A"/>
    <property type="chains" value="O2/o2=2-130"/>
</dbReference>
<dbReference type="PDB" id="4U4Z">
    <property type="method" value="X-ray"/>
    <property type="resolution" value="3.10 A"/>
    <property type="chains" value="O2/o2=2-130"/>
</dbReference>
<dbReference type="PDB" id="4U50">
    <property type="method" value="X-ray"/>
    <property type="resolution" value="3.20 A"/>
    <property type="chains" value="O2/o2=2-130"/>
</dbReference>
<dbReference type="PDB" id="4U51">
    <property type="method" value="X-ray"/>
    <property type="resolution" value="3.20 A"/>
    <property type="chains" value="O2/o2=2-130"/>
</dbReference>
<dbReference type="PDB" id="4U52">
    <property type="method" value="X-ray"/>
    <property type="resolution" value="3.00 A"/>
    <property type="chains" value="O2/o2=2-130"/>
</dbReference>
<dbReference type="PDB" id="4U53">
    <property type="method" value="X-ray"/>
    <property type="resolution" value="3.30 A"/>
    <property type="chains" value="O2/o2=2-130"/>
</dbReference>
<dbReference type="PDB" id="4U55">
    <property type="method" value="X-ray"/>
    <property type="resolution" value="3.20 A"/>
    <property type="chains" value="O2/o2=2-130"/>
</dbReference>
<dbReference type="PDB" id="4U56">
    <property type="method" value="X-ray"/>
    <property type="resolution" value="3.45 A"/>
    <property type="chains" value="O2/o2=2-130"/>
</dbReference>
<dbReference type="PDB" id="4U6F">
    <property type="method" value="X-ray"/>
    <property type="resolution" value="3.10 A"/>
    <property type="chains" value="O2/o2=2-130"/>
</dbReference>
<dbReference type="PDB" id="4V4B">
    <property type="method" value="EM"/>
    <property type="resolution" value="11.70 A"/>
    <property type="chains" value="B0=1-130"/>
</dbReference>
<dbReference type="PDB" id="4V6I">
    <property type="method" value="EM"/>
    <property type="resolution" value="8.80 A"/>
    <property type="chains" value="Bh=1-130"/>
</dbReference>
<dbReference type="PDB" id="4V7F">
    <property type="method" value="EM"/>
    <property type="resolution" value="8.70 A"/>
    <property type="chains" value="d=1-130"/>
</dbReference>
<dbReference type="PDB" id="4V7R">
    <property type="method" value="X-ray"/>
    <property type="resolution" value="4.00 A"/>
    <property type="chains" value="Bb/Db=1-130"/>
</dbReference>
<dbReference type="PDB" id="4V88">
    <property type="method" value="X-ray"/>
    <property type="resolution" value="3.00 A"/>
    <property type="chains" value="Be/De=1-130"/>
</dbReference>
<dbReference type="PDB" id="4V8T">
    <property type="method" value="EM"/>
    <property type="resolution" value="8.10 A"/>
    <property type="chains" value="e=1-130"/>
</dbReference>
<dbReference type="PDB" id="4V8Y">
    <property type="method" value="EM"/>
    <property type="resolution" value="4.30 A"/>
    <property type="chains" value="Be=2-130"/>
</dbReference>
<dbReference type="PDB" id="4V8Z">
    <property type="method" value="EM"/>
    <property type="resolution" value="6.60 A"/>
    <property type="chains" value="Be=2-130"/>
</dbReference>
<dbReference type="PDB" id="4V91">
    <property type="method" value="EM"/>
    <property type="resolution" value="3.70 A"/>
    <property type="chains" value="e=1-130"/>
</dbReference>
<dbReference type="PDB" id="5APN">
    <property type="method" value="EM"/>
    <property type="resolution" value="3.91 A"/>
    <property type="chains" value="e=1-130"/>
</dbReference>
<dbReference type="PDB" id="5APO">
    <property type="method" value="EM"/>
    <property type="resolution" value="3.41 A"/>
    <property type="chains" value="e=1-130"/>
</dbReference>
<dbReference type="PDB" id="5DAT">
    <property type="method" value="X-ray"/>
    <property type="resolution" value="3.15 A"/>
    <property type="chains" value="O2/o2=2-130"/>
</dbReference>
<dbReference type="PDB" id="5DC3">
    <property type="method" value="X-ray"/>
    <property type="resolution" value="3.25 A"/>
    <property type="chains" value="O2/o2=2-130"/>
</dbReference>
<dbReference type="PDB" id="5DGE">
    <property type="method" value="X-ray"/>
    <property type="resolution" value="3.45 A"/>
    <property type="chains" value="O2/o2=2-130"/>
</dbReference>
<dbReference type="PDB" id="5DGF">
    <property type="method" value="X-ray"/>
    <property type="resolution" value="3.30 A"/>
    <property type="chains" value="O2/o2=2-130"/>
</dbReference>
<dbReference type="PDB" id="5DGV">
    <property type="method" value="X-ray"/>
    <property type="resolution" value="3.10 A"/>
    <property type="chains" value="O2/o2=2-130"/>
</dbReference>
<dbReference type="PDB" id="5FCI">
    <property type="method" value="X-ray"/>
    <property type="resolution" value="3.40 A"/>
    <property type="chains" value="O2/o2=2-130"/>
</dbReference>
<dbReference type="PDB" id="5FCJ">
    <property type="method" value="X-ray"/>
    <property type="resolution" value="3.10 A"/>
    <property type="chains" value="O2/o2=2-130"/>
</dbReference>
<dbReference type="PDB" id="5GAK">
    <property type="method" value="EM"/>
    <property type="resolution" value="3.88 A"/>
    <property type="chains" value="g=1-130"/>
</dbReference>
<dbReference type="PDB" id="5H4P">
    <property type="method" value="EM"/>
    <property type="resolution" value="3.07 A"/>
    <property type="chains" value="e=1-130"/>
</dbReference>
<dbReference type="PDB" id="5I4L">
    <property type="method" value="X-ray"/>
    <property type="resolution" value="3.10 A"/>
    <property type="chains" value="O2/o2=2-128"/>
</dbReference>
<dbReference type="PDB" id="5JCS">
    <property type="method" value="EM"/>
    <property type="resolution" value="9.50 A"/>
    <property type="chains" value="e=1-130"/>
</dbReference>
<dbReference type="PDB" id="5JUO">
    <property type="method" value="EM"/>
    <property type="resolution" value="4.00 A"/>
    <property type="chains" value="JA=1-130"/>
</dbReference>
<dbReference type="PDB" id="5JUP">
    <property type="method" value="EM"/>
    <property type="resolution" value="3.50 A"/>
    <property type="chains" value="JA=1-130"/>
</dbReference>
<dbReference type="PDB" id="5JUS">
    <property type="method" value="EM"/>
    <property type="resolution" value="4.20 A"/>
    <property type="chains" value="JA=1-130"/>
</dbReference>
<dbReference type="PDB" id="5JUT">
    <property type="method" value="EM"/>
    <property type="resolution" value="4.00 A"/>
    <property type="chains" value="JA=1-130"/>
</dbReference>
<dbReference type="PDB" id="5JUU">
    <property type="method" value="EM"/>
    <property type="resolution" value="4.00 A"/>
    <property type="chains" value="JA=1-130"/>
</dbReference>
<dbReference type="PDB" id="5LYB">
    <property type="method" value="X-ray"/>
    <property type="resolution" value="3.25 A"/>
    <property type="chains" value="O2/o2=2-128"/>
</dbReference>
<dbReference type="PDB" id="5M1J">
    <property type="method" value="EM"/>
    <property type="resolution" value="3.30 A"/>
    <property type="chains" value="e5=2-128"/>
</dbReference>
<dbReference type="PDB" id="5MC6">
    <property type="method" value="EM"/>
    <property type="resolution" value="3.80 A"/>
    <property type="chains" value="BG=1-130"/>
</dbReference>
<dbReference type="PDB" id="5MEI">
    <property type="method" value="X-ray"/>
    <property type="resolution" value="3.50 A"/>
    <property type="chains" value="AF/DG=2-128"/>
</dbReference>
<dbReference type="PDB" id="5NDG">
    <property type="method" value="X-ray"/>
    <property type="resolution" value="3.70 A"/>
    <property type="chains" value="O2/o2=2-128"/>
</dbReference>
<dbReference type="PDB" id="5NDV">
    <property type="method" value="X-ray"/>
    <property type="resolution" value="3.30 A"/>
    <property type="chains" value="O2/o2=2-128"/>
</dbReference>
<dbReference type="PDB" id="5NDW">
    <property type="method" value="X-ray"/>
    <property type="resolution" value="3.70 A"/>
    <property type="chains" value="O2/o2=2-128"/>
</dbReference>
<dbReference type="PDB" id="5OBM">
    <property type="method" value="X-ray"/>
    <property type="resolution" value="3.40 A"/>
    <property type="chains" value="O2/o2=2-128"/>
</dbReference>
<dbReference type="PDB" id="5ON6">
    <property type="method" value="X-ray"/>
    <property type="resolution" value="3.10 A"/>
    <property type="chains" value="AF/DG=2-128"/>
</dbReference>
<dbReference type="PDB" id="5T62">
    <property type="method" value="EM"/>
    <property type="resolution" value="3.30 A"/>
    <property type="chains" value="r=1-130"/>
</dbReference>
<dbReference type="PDB" id="5T6R">
    <property type="method" value="EM"/>
    <property type="resolution" value="4.50 A"/>
    <property type="chains" value="r=1-130"/>
</dbReference>
<dbReference type="PDB" id="5TBW">
    <property type="method" value="X-ray"/>
    <property type="resolution" value="3.00 A"/>
    <property type="chains" value="AF/DG=2-128"/>
</dbReference>
<dbReference type="PDB" id="5TGA">
    <property type="method" value="X-ray"/>
    <property type="resolution" value="3.30 A"/>
    <property type="chains" value="O2/o2=2-128"/>
</dbReference>
<dbReference type="PDB" id="5TGM">
    <property type="method" value="X-ray"/>
    <property type="resolution" value="3.50 A"/>
    <property type="chains" value="O2/o2=2-128"/>
</dbReference>
<dbReference type="PDB" id="5Z3G">
    <property type="method" value="EM"/>
    <property type="resolution" value="3.65 A"/>
    <property type="chains" value="i=1-130"/>
</dbReference>
<dbReference type="PDB" id="6C0F">
    <property type="method" value="EM"/>
    <property type="resolution" value="3.70 A"/>
    <property type="chains" value="e=1-130"/>
</dbReference>
<dbReference type="PDB" id="6CB1">
    <property type="method" value="EM"/>
    <property type="resolution" value="4.60 A"/>
    <property type="chains" value="e=1-130"/>
</dbReference>
<dbReference type="PDB" id="6ELZ">
    <property type="method" value="EM"/>
    <property type="resolution" value="3.30 A"/>
    <property type="chains" value="e=1-130"/>
</dbReference>
<dbReference type="PDB" id="6EM1">
    <property type="method" value="EM"/>
    <property type="resolution" value="3.60 A"/>
    <property type="chains" value="e=1-130"/>
</dbReference>
<dbReference type="PDB" id="6EM3">
    <property type="method" value="EM"/>
    <property type="resolution" value="3.20 A"/>
    <property type="chains" value="e=1-130"/>
</dbReference>
<dbReference type="PDB" id="6EM4">
    <property type="method" value="EM"/>
    <property type="resolution" value="4.10 A"/>
    <property type="chains" value="e=1-130"/>
</dbReference>
<dbReference type="PDB" id="6EM5">
    <property type="method" value="EM"/>
    <property type="resolution" value="4.30 A"/>
    <property type="chains" value="e=1-130"/>
</dbReference>
<dbReference type="PDB" id="6FT6">
    <property type="method" value="EM"/>
    <property type="resolution" value="3.90 A"/>
    <property type="chains" value="e=1-130"/>
</dbReference>
<dbReference type="PDB" id="6GQ1">
    <property type="method" value="EM"/>
    <property type="resolution" value="4.40 A"/>
    <property type="chains" value="e=2-128"/>
</dbReference>
<dbReference type="PDB" id="6GQB">
    <property type="method" value="EM"/>
    <property type="resolution" value="3.90 A"/>
    <property type="chains" value="e=2-128"/>
</dbReference>
<dbReference type="PDB" id="6GQV">
    <property type="method" value="EM"/>
    <property type="resolution" value="4.00 A"/>
    <property type="chains" value="e=2-128"/>
</dbReference>
<dbReference type="PDB" id="6HD7">
    <property type="method" value="EM"/>
    <property type="resolution" value="3.40 A"/>
    <property type="chains" value="g=1-130"/>
</dbReference>
<dbReference type="PDB" id="6HHQ">
    <property type="method" value="X-ray"/>
    <property type="resolution" value="3.10 A"/>
    <property type="chains" value="AF/DG=1-130"/>
</dbReference>
<dbReference type="PDB" id="6I7O">
    <property type="method" value="EM"/>
    <property type="resolution" value="5.30 A"/>
    <property type="chains" value="BG/YG=2-128"/>
</dbReference>
<dbReference type="PDB" id="6M62">
    <property type="method" value="EM"/>
    <property type="resolution" value="3.20 A"/>
    <property type="chains" value="e=1-130"/>
</dbReference>
<dbReference type="PDB" id="6N8J">
    <property type="method" value="EM"/>
    <property type="resolution" value="3.50 A"/>
    <property type="chains" value="e=1-130"/>
</dbReference>
<dbReference type="PDB" id="6N8K">
    <property type="method" value="EM"/>
    <property type="resolution" value="3.60 A"/>
    <property type="chains" value="e=1-130"/>
</dbReference>
<dbReference type="PDB" id="6N8L">
    <property type="method" value="EM"/>
    <property type="resolution" value="3.60 A"/>
    <property type="chains" value="e=1-130"/>
</dbReference>
<dbReference type="PDB" id="6N8M">
    <property type="method" value="EM"/>
    <property type="resolution" value="3.50 A"/>
    <property type="chains" value="r=1-130"/>
</dbReference>
<dbReference type="PDB" id="6N8N">
    <property type="method" value="EM"/>
    <property type="resolution" value="3.80 A"/>
    <property type="chains" value="r=1-130"/>
</dbReference>
<dbReference type="PDB" id="6N8O">
    <property type="method" value="EM"/>
    <property type="resolution" value="3.50 A"/>
    <property type="chains" value="r=1-130"/>
</dbReference>
<dbReference type="PDB" id="6OIG">
    <property type="method" value="EM"/>
    <property type="resolution" value="3.80 A"/>
    <property type="chains" value="e=2-128"/>
</dbReference>
<dbReference type="PDB" id="6Q8Y">
    <property type="method" value="EM"/>
    <property type="resolution" value="3.10 A"/>
    <property type="chains" value="BG=2-128"/>
</dbReference>
<dbReference type="PDB" id="6QIK">
    <property type="method" value="EM"/>
    <property type="resolution" value="3.10 A"/>
    <property type="chains" value="e=1-130"/>
</dbReference>
<dbReference type="PDB" id="6QT0">
    <property type="method" value="EM"/>
    <property type="resolution" value="3.40 A"/>
    <property type="chains" value="e=1-130"/>
</dbReference>
<dbReference type="PDB" id="6QTZ">
    <property type="method" value="EM"/>
    <property type="resolution" value="3.50 A"/>
    <property type="chains" value="e=1-130"/>
</dbReference>
<dbReference type="PDB" id="6R84">
    <property type="method" value="EM"/>
    <property type="resolution" value="3.60 A"/>
    <property type="chains" value="g=2-128"/>
</dbReference>
<dbReference type="PDB" id="6R86">
    <property type="method" value="EM"/>
    <property type="resolution" value="3.40 A"/>
    <property type="chains" value="g=2-128"/>
</dbReference>
<dbReference type="PDB" id="6R87">
    <property type="method" value="EM"/>
    <property type="resolution" value="3.40 A"/>
    <property type="chains" value="g=2-128"/>
</dbReference>
<dbReference type="PDB" id="6RI5">
    <property type="method" value="EM"/>
    <property type="resolution" value="3.30 A"/>
    <property type="chains" value="e=1-130"/>
</dbReference>
<dbReference type="PDB" id="6RZZ">
    <property type="method" value="EM"/>
    <property type="resolution" value="3.20 A"/>
    <property type="chains" value="e=1-130"/>
</dbReference>
<dbReference type="PDB" id="6S05">
    <property type="method" value="EM"/>
    <property type="resolution" value="3.90 A"/>
    <property type="chains" value="e=1-130"/>
</dbReference>
<dbReference type="PDB" id="6S47">
    <property type="method" value="EM"/>
    <property type="resolution" value="3.28 A"/>
    <property type="chains" value="Ag=2-130"/>
</dbReference>
<dbReference type="PDB" id="6SNT">
    <property type="method" value="EM"/>
    <property type="resolution" value="2.80 A"/>
    <property type="chains" value="al=1-130"/>
</dbReference>
<dbReference type="PDB" id="6SV4">
    <property type="method" value="EM"/>
    <property type="resolution" value="3.30 A"/>
    <property type="chains" value="BG/YG/ZG=1-130"/>
</dbReference>
<dbReference type="PDB" id="6T4Q">
    <property type="method" value="EM"/>
    <property type="resolution" value="2.60 A"/>
    <property type="chains" value="Le=2-128"/>
</dbReference>
<dbReference type="PDB" id="6T7I">
    <property type="method" value="EM"/>
    <property type="resolution" value="3.20 A"/>
    <property type="chains" value="Le=1-130"/>
</dbReference>
<dbReference type="PDB" id="6T7T">
    <property type="method" value="EM"/>
    <property type="resolution" value="3.10 A"/>
    <property type="chains" value="Le=1-130"/>
</dbReference>
<dbReference type="PDB" id="6T83">
    <property type="method" value="EM"/>
    <property type="resolution" value="4.00 A"/>
    <property type="chains" value="P/ey=1-130"/>
</dbReference>
<dbReference type="PDB" id="6TB3">
    <property type="method" value="EM"/>
    <property type="resolution" value="2.80 A"/>
    <property type="chains" value="BG=2-128"/>
</dbReference>
<dbReference type="PDB" id="6TNU">
    <property type="method" value="EM"/>
    <property type="resolution" value="3.10 A"/>
    <property type="chains" value="BG=2-128"/>
</dbReference>
<dbReference type="PDB" id="6WOO">
    <property type="method" value="EM"/>
    <property type="resolution" value="2.90 A"/>
    <property type="chains" value="e=5-126"/>
</dbReference>
<dbReference type="PDB" id="6YLG">
    <property type="method" value="EM"/>
    <property type="resolution" value="3.00 A"/>
    <property type="chains" value="e=1-130"/>
</dbReference>
<dbReference type="PDB" id="6YLH">
    <property type="method" value="EM"/>
    <property type="resolution" value="3.10 A"/>
    <property type="chains" value="e=1-130"/>
</dbReference>
<dbReference type="PDB" id="6YLX">
    <property type="method" value="EM"/>
    <property type="resolution" value="3.90 A"/>
    <property type="chains" value="e=1-130"/>
</dbReference>
<dbReference type="PDB" id="6YLY">
    <property type="method" value="EM"/>
    <property type="resolution" value="3.80 A"/>
    <property type="chains" value="e=1-130"/>
</dbReference>
<dbReference type="PDB" id="6Z6J">
    <property type="method" value="EM"/>
    <property type="resolution" value="3.40 A"/>
    <property type="chains" value="Le=1-130"/>
</dbReference>
<dbReference type="PDB" id="6Z6K">
    <property type="method" value="EM"/>
    <property type="resolution" value="3.40 A"/>
    <property type="chains" value="Le=1-130"/>
</dbReference>
<dbReference type="PDB" id="7AZY">
    <property type="method" value="EM"/>
    <property type="resolution" value="2.88 A"/>
    <property type="chains" value="r=1-130"/>
</dbReference>
<dbReference type="PDB" id="7B7D">
    <property type="method" value="EM"/>
    <property type="resolution" value="3.30 A"/>
    <property type="chains" value="La=2-128"/>
</dbReference>
<dbReference type="PDB" id="7BT6">
    <property type="method" value="EM"/>
    <property type="resolution" value="3.12 A"/>
    <property type="chains" value="e=1-130"/>
</dbReference>
<dbReference type="PDB" id="7BTB">
    <property type="method" value="EM"/>
    <property type="resolution" value="3.22 A"/>
    <property type="chains" value="e=1-130"/>
</dbReference>
<dbReference type="PDB" id="7MPI">
    <property type="method" value="EM"/>
    <property type="resolution" value="3.05 A"/>
    <property type="chains" value="Ae=2-128"/>
</dbReference>
<dbReference type="PDB" id="7MPJ">
    <property type="method" value="EM"/>
    <property type="resolution" value="2.70 A"/>
    <property type="chains" value="Ae=2-128"/>
</dbReference>
<dbReference type="PDB" id="7N8B">
    <property type="method" value="EM"/>
    <property type="resolution" value="3.05 A"/>
    <property type="chains" value="Ae=2-128"/>
</dbReference>
<dbReference type="PDB" id="7NAC">
    <property type="method" value="EM"/>
    <property type="resolution" value="3.04 A"/>
    <property type="chains" value="e=1-130"/>
</dbReference>
<dbReference type="PDB" id="7NRC">
    <property type="method" value="EM"/>
    <property type="resolution" value="3.90 A"/>
    <property type="chains" value="Lg=2-128"/>
</dbReference>
<dbReference type="PDB" id="7NRD">
    <property type="method" value="EM"/>
    <property type="resolution" value="4.36 A"/>
    <property type="chains" value="Lg=2-128"/>
</dbReference>
<dbReference type="PDB" id="7OF1">
    <property type="method" value="EM"/>
    <property type="resolution" value="3.10 A"/>
    <property type="chains" value="e=1-130"/>
</dbReference>
<dbReference type="PDB" id="7OH3">
    <property type="method" value="EM"/>
    <property type="resolution" value="3.40 A"/>
    <property type="chains" value="e=1-130"/>
</dbReference>
<dbReference type="PDB" id="7OHP">
    <property type="method" value="EM"/>
    <property type="resolution" value="3.90 A"/>
    <property type="chains" value="e=1-130"/>
</dbReference>
<dbReference type="PDB" id="7OHQ">
    <property type="method" value="EM"/>
    <property type="resolution" value="3.10 A"/>
    <property type="chains" value="e=1-130"/>
</dbReference>
<dbReference type="PDB" id="7OHR">
    <property type="method" value="EM"/>
    <property type="resolution" value="4.72 A"/>
    <property type="chains" value="e=1-130"/>
</dbReference>
<dbReference type="PDB" id="7OHS">
    <property type="method" value="EM"/>
    <property type="resolution" value="4.38 A"/>
    <property type="chains" value="e=1-130"/>
</dbReference>
<dbReference type="PDB" id="7OHT">
    <property type="method" value="EM"/>
    <property type="resolution" value="4.70 A"/>
    <property type="chains" value="e=1-130"/>
</dbReference>
<dbReference type="PDB" id="7OHU">
    <property type="method" value="EM"/>
    <property type="resolution" value="3.70 A"/>
    <property type="chains" value="e=1-130"/>
</dbReference>
<dbReference type="PDB" id="7OHV">
    <property type="method" value="EM"/>
    <property type="resolution" value="3.90 A"/>
    <property type="chains" value="e=1-130"/>
</dbReference>
<dbReference type="PDB" id="7OHW">
    <property type="method" value="EM"/>
    <property type="resolution" value="3.50 A"/>
    <property type="chains" value="e=1-130"/>
</dbReference>
<dbReference type="PDB" id="7OHX">
    <property type="method" value="EM"/>
    <property type="resolution" value="3.30 A"/>
    <property type="chains" value="e=1-130"/>
</dbReference>
<dbReference type="PDB" id="7OHY">
    <property type="method" value="EM"/>
    <property type="resolution" value="3.90 A"/>
    <property type="chains" value="e=1-130"/>
</dbReference>
<dbReference type="PDB" id="7R7A">
    <property type="method" value="EM"/>
    <property type="resolution" value="3.04 A"/>
    <property type="chains" value="e=1-130"/>
</dbReference>
<dbReference type="PDB" id="7U0H">
    <property type="method" value="EM"/>
    <property type="resolution" value="2.76 A"/>
    <property type="chains" value="e=1-130"/>
</dbReference>
<dbReference type="PDB" id="7UG6">
    <property type="method" value="EM"/>
    <property type="resolution" value="2.90 A"/>
    <property type="chains" value="e=1-130"/>
</dbReference>
<dbReference type="PDB" id="7UOO">
    <property type="method" value="EM"/>
    <property type="resolution" value="2.34 A"/>
    <property type="chains" value="e=1-130"/>
</dbReference>
<dbReference type="PDB" id="7UQB">
    <property type="method" value="EM"/>
    <property type="resolution" value="2.43 A"/>
    <property type="chains" value="e=1-130"/>
</dbReference>
<dbReference type="PDB" id="7UQZ">
    <property type="method" value="EM"/>
    <property type="resolution" value="2.44 A"/>
    <property type="chains" value="e=1-130"/>
</dbReference>
<dbReference type="PDB" id="7V08">
    <property type="method" value="EM"/>
    <property type="resolution" value="2.36 A"/>
    <property type="chains" value="e=1-130"/>
</dbReference>
<dbReference type="PDB" id="7Z34">
    <property type="method" value="EM"/>
    <property type="resolution" value="3.80 A"/>
    <property type="chains" value="e=1-130"/>
</dbReference>
<dbReference type="PDB" id="7ZPQ">
    <property type="method" value="EM"/>
    <property type="resolution" value="3.47 A"/>
    <property type="chains" value="Bd=2-128"/>
</dbReference>
<dbReference type="PDB" id="7ZRS">
    <property type="method" value="EM"/>
    <property type="resolution" value="4.80 A"/>
    <property type="chains" value="Bd=2-128"/>
</dbReference>
<dbReference type="PDB" id="7ZS5">
    <property type="method" value="EM"/>
    <property type="resolution" value="3.20 A"/>
    <property type="chains" value="Bf=2-128"/>
</dbReference>
<dbReference type="PDB" id="7ZUW">
    <property type="method" value="EM"/>
    <property type="resolution" value="4.30 A"/>
    <property type="chains" value="Bd=2-128"/>
</dbReference>
<dbReference type="PDB" id="7ZUX">
    <property type="method" value="EM"/>
    <property type="resolution" value="2.50 A"/>
    <property type="chains" value="Ed=2-128"/>
</dbReference>
<dbReference type="PDB" id="7ZW0">
    <property type="method" value="EM"/>
    <property type="resolution" value="2.40 A"/>
    <property type="chains" value="Lh=1-130"/>
</dbReference>
<dbReference type="PDB" id="8AAF">
    <property type="method" value="EM"/>
    <property type="resolution" value="2.50 A"/>
    <property type="chains" value="R=1-130"/>
</dbReference>
<dbReference type="PDB" id="8AGT">
    <property type="method" value="EM"/>
    <property type="resolution" value="2.60 A"/>
    <property type="chains" value="R=1-130"/>
</dbReference>
<dbReference type="PDB" id="8AGU">
    <property type="method" value="EM"/>
    <property type="resolution" value="2.70 A"/>
    <property type="chains" value="R=1-130"/>
</dbReference>
<dbReference type="PDB" id="8AGV">
    <property type="method" value="EM"/>
    <property type="resolution" value="2.60 A"/>
    <property type="chains" value="R=1-130"/>
</dbReference>
<dbReference type="PDB" id="8AGW">
    <property type="method" value="EM"/>
    <property type="resolution" value="2.60 A"/>
    <property type="chains" value="R=1-130"/>
</dbReference>
<dbReference type="PDB" id="8AGX">
    <property type="method" value="EM"/>
    <property type="resolution" value="2.40 A"/>
    <property type="chains" value="R=1-130"/>
</dbReference>
<dbReference type="PDB" id="8AGZ">
    <property type="method" value="EM"/>
    <property type="resolution" value="2.60 A"/>
    <property type="chains" value="R=1-130"/>
</dbReference>
<dbReference type="PDB" id="8BIP">
    <property type="method" value="EM"/>
    <property type="resolution" value="3.10 A"/>
    <property type="chains" value="Le=2-128"/>
</dbReference>
<dbReference type="PDB" id="8BJQ">
    <property type="method" value="EM"/>
    <property type="resolution" value="3.80 A"/>
    <property type="chains" value="Le=2-128"/>
</dbReference>
<dbReference type="PDB" id="8BN3">
    <property type="method" value="EM"/>
    <property type="resolution" value="2.40 A"/>
    <property type="chains" value="O2=2-128"/>
</dbReference>
<dbReference type="PDB" id="8BQD">
    <property type="method" value="EM"/>
    <property type="resolution" value="3.90 A"/>
    <property type="chains" value="BG=2-128"/>
</dbReference>
<dbReference type="PDB" id="8BQX">
    <property type="method" value="EM"/>
    <property type="resolution" value="3.80 A"/>
    <property type="chains" value="BG=2-128"/>
</dbReference>
<dbReference type="PDB" id="8CCS">
    <property type="method" value="EM"/>
    <property type="resolution" value="1.97 A"/>
    <property type="chains" value="Q=1-130"/>
</dbReference>
<dbReference type="PDB" id="8CDL">
    <property type="method" value="EM"/>
    <property type="resolution" value="2.72 A"/>
    <property type="chains" value="Q=1-130"/>
</dbReference>
<dbReference type="PDB" id="8CDR">
    <property type="method" value="EM"/>
    <property type="resolution" value="2.04 A"/>
    <property type="chains" value="Q=1-130"/>
</dbReference>
<dbReference type="PDB" id="8CEH">
    <property type="method" value="EM"/>
    <property type="resolution" value="2.05 A"/>
    <property type="chains" value="Q=1-130"/>
</dbReference>
<dbReference type="PDB" id="8CF5">
    <property type="method" value="EM"/>
    <property type="resolution" value="2.71 A"/>
    <property type="chains" value="Q=1-130"/>
</dbReference>
<dbReference type="PDB" id="8CG8">
    <property type="method" value="EM"/>
    <property type="resolution" value="2.57 A"/>
    <property type="chains" value="Q=1-130"/>
</dbReference>
<dbReference type="PDB" id="8CGN">
    <property type="method" value="EM"/>
    <property type="resolution" value="2.28 A"/>
    <property type="chains" value="Q=1-130"/>
</dbReference>
<dbReference type="PDB" id="8CIV">
    <property type="method" value="EM"/>
    <property type="resolution" value="2.47 A"/>
    <property type="chains" value="Q=1-130"/>
</dbReference>
<dbReference type="PDB" id="8CKU">
    <property type="method" value="EM"/>
    <property type="resolution" value="3.11 A"/>
    <property type="chains" value="Q=1-130"/>
</dbReference>
<dbReference type="PDB" id="8CMJ">
    <property type="method" value="EM"/>
    <property type="resolution" value="3.79 A"/>
    <property type="chains" value="Q=1-130"/>
</dbReference>
<dbReference type="PDB" id="8E5T">
    <property type="method" value="EM"/>
    <property type="resolution" value="4.00 A"/>
    <property type="chains" value="e=1-130"/>
</dbReference>
<dbReference type="PDB" id="8HFR">
    <property type="method" value="EM"/>
    <property type="resolution" value="2.64 A"/>
    <property type="chains" value="eH=1-130"/>
</dbReference>
<dbReference type="PDB" id="8K2D">
    <property type="method" value="EM"/>
    <property type="resolution" value="3.20 A"/>
    <property type="chains" value="Le=1-130"/>
</dbReference>
<dbReference type="PDB" id="8K82">
    <property type="method" value="EM"/>
    <property type="resolution" value="3.00 A"/>
    <property type="chains" value="Le=1-130"/>
</dbReference>
<dbReference type="PDB" id="8P4V">
    <property type="method" value="X-ray"/>
    <property type="resolution" value="3.16 A"/>
    <property type="chains" value="AF/DG=1-130"/>
</dbReference>
<dbReference type="PDB" id="8P8M">
    <property type="method" value="EM"/>
    <property type="resolution" value="2.66 A"/>
    <property type="chains" value="RE=1-130"/>
</dbReference>
<dbReference type="PDB" id="8P8N">
    <property type="method" value="EM"/>
    <property type="resolution" value="2.15 A"/>
    <property type="chains" value="RE=1-130"/>
</dbReference>
<dbReference type="PDB" id="8P8U">
    <property type="method" value="EM"/>
    <property type="resolution" value="2.23 A"/>
    <property type="chains" value="RE=1-130"/>
</dbReference>
<dbReference type="PDB" id="8P9A">
    <property type="method" value="X-ray"/>
    <property type="resolution" value="2.90 A"/>
    <property type="chains" value="AF/DG=1-130"/>
</dbReference>
<dbReference type="PDB" id="8PFR">
    <property type="method" value="EM"/>
    <property type="resolution" value="2.15 A"/>
    <property type="chains" value="RE=1-130"/>
</dbReference>
<dbReference type="PDB" id="8T2X">
    <property type="method" value="EM"/>
    <property type="resolution" value="2.46 A"/>
    <property type="chains" value="Ae=1-130"/>
</dbReference>
<dbReference type="PDB" id="8T2Y">
    <property type="method" value="EM"/>
    <property type="resolution" value="2.20 A"/>
    <property type="chains" value="Ae=1-130"/>
</dbReference>
<dbReference type="PDB" id="8T2Z">
    <property type="method" value="EM"/>
    <property type="resolution" value="2.40 A"/>
    <property type="chains" value="Ae=1-130"/>
</dbReference>
<dbReference type="PDB" id="8T30">
    <property type="method" value="EM"/>
    <property type="resolution" value="2.88 A"/>
    <property type="chains" value="Ae=1-130"/>
</dbReference>
<dbReference type="PDB" id="8T3A">
    <property type="method" value="EM"/>
    <property type="resolution" value="2.86 A"/>
    <property type="chains" value="Ae=1-130"/>
</dbReference>
<dbReference type="PDB" id="8T3B">
    <property type="method" value="EM"/>
    <property type="resolution" value="3.08 A"/>
    <property type="chains" value="Ae=1-130"/>
</dbReference>
<dbReference type="PDB" id="8T3C">
    <property type="method" value="EM"/>
    <property type="resolution" value="3.86 A"/>
    <property type="chains" value="Ae=1-130"/>
</dbReference>
<dbReference type="PDB" id="8T3D">
    <property type="method" value="EM"/>
    <property type="resolution" value="2.95 A"/>
    <property type="chains" value="Ae=1-130"/>
</dbReference>
<dbReference type="PDB" id="8T3E">
    <property type="method" value="EM"/>
    <property type="resolution" value="3.04 A"/>
    <property type="chains" value="Ae=1-130"/>
</dbReference>
<dbReference type="PDB" id="8T3F">
    <property type="method" value="EM"/>
    <property type="resolution" value="3.09 A"/>
    <property type="chains" value="Ae=1-130"/>
</dbReference>
<dbReference type="PDB" id="8UT0">
    <property type="method" value="EM"/>
    <property type="resolution" value="3.22 A"/>
    <property type="chains" value="Lg=2-128"/>
</dbReference>
<dbReference type="PDB" id="8UTI">
    <property type="method" value="EM"/>
    <property type="resolution" value="3.13 A"/>
    <property type="chains" value="Lg=2-128"/>
</dbReference>
<dbReference type="PDB" id="8V83">
    <property type="method" value="EM"/>
    <property type="resolution" value="2.53 A"/>
    <property type="chains" value="e=1-130"/>
</dbReference>
<dbReference type="PDB" id="8V84">
    <property type="method" value="EM"/>
    <property type="resolution" value="2.70 A"/>
    <property type="chains" value="e=1-130"/>
</dbReference>
<dbReference type="PDB" id="8V87">
    <property type="method" value="EM"/>
    <property type="resolution" value="2.66 A"/>
    <property type="chains" value="e=1-130"/>
</dbReference>
<dbReference type="PDB" id="8XU8">
    <property type="method" value="EM"/>
    <property type="resolution" value="3.40 A"/>
    <property type="chains" value="g=2-128"/>
</dbReference>
<dbReference type="PDB" id="8Y0U">
    <property type="method" value="EM"/>
    <property type="resolution" value="3.59 A"/>
    <property type="chains" value="Le=1-130"/>
</dbReference>
<dbReference type="PDB" id="8YLD">
    <property type="method" value="EM"/>
    <property type="resolution" value="3.90 A"/>
    <property type="chains" value="g=2-128"/>
</dbReference>
<dbReference type="PDB" id="8YLR">
    <property type="method" value="EM"/>
    <property type="resolution" value="3.90 A"/>
    <property type="chains" value="g=2-128"/>
</dbReference>
<dbReference type="PDB" id="8Z70">
    <property type="method" value="EM"/>
    <property type="resolution" value="3.20 A"/>
    <property type="chains" value="g=2-128"/>
</dbReference>
<dbReference type="PDB" id="8Z71">
    <property type="method" value="EM"/>
    <property type="resolution" value="3.60 A"/>
    <property type="chains" value="g=2-128"/>
</dbReference>
<dbReference type="PDB" id="9F9S">
    <property type="method" value="EM"/>
    <property type="resolution" value="2.90 A"/>
    <property type="chains" value="Lm/Mm=1-130"/>
</dbReference>
<dbReference type="PDBsum" id="3J6X"/>
<dbReference type="PDBsum" id="3J6Y"/>
<dbReference type="PDBsum" id="3J77"/>
<dbReference type="PDBsum" id="3J78"/>
<dbReference type="PDBsum" id="3JCT"/>
<dbReference type="PDBsum" id="4U3M"/>
<dbReference type="PDBsum" id="4U3N"/>
<dbReference type="PDBsum" id="4U3U"/>
<dbReference type="PDBsum" id="4U4N"/>
<dbReference type="PDBsum" id="4U4O"/>
<dbReference type="PDBsum" id="4U4Q"/>
<dbReference type="PDBsum" id="4U4R"/>
<dbReference type="PDBsum" id="4U4U"/>
<dbReference type="PDBsum" id="4U4Y"/>
<dbReference type="PDBsum" id="4U4Z"/>
<dbReference type="PDBsum" id="4U50"/>
<dbReference type="PDBsum" id="4U51"/>
<dbReference type="PDBsum" id="4U52"/>
<dbReference type="PDBsum" id="4U53"/>
<dbReference type="PDBsum" id="4U55"/>
<dbReference type="PDBsum" id="4U56"/>
<dbReference type="PDBsum" id="4U6F"/>
<dbReference type="PDBsum" id="4V4B"/>
<dbReference type="PDBsum" id="4V6I"/>
<dbReference type="PDBsum" id="4V7F"/>
<dbReference type="PDBsum" id="4V7R"/>
<dbReference type="PDBsum" id="4V88"/>
<dbReference type="PDBsum" id="4V8T"/>
<dbReference type="PDBsum" id="4V8Y"/>
<dbReference type="PDBsum" id="4V8Z"/>
<dbReference type="PDBsum" id="4V91"/>
<dbReference type="PDBsum" id="5APN"/>
<dbReference type="PDBsum" id="5APO"/>
<dbReference type="PDBsum" id="5DAT"/>
<dbReference type="PDBsum" id="5DC3"/>
<dbReference type="PDBsum" id="5DGE"/>
<dbReference type="PDBsum" id="5DGF"/>
<dbReference type="PDBsum" id="5DGV"/>
<dbReference type="PDBsum" id="5FCI"/>
<dbReference type="PDBsum" id="5FCJ"/>
<dbReference type="PDBsum" id="5GAK"/>
<dbReference type="PDBsum" id="5H4P"/>
<dbReference type="PDBsum" id="5I4L"/>
<dbReference type="PDBsum" id="5JCS"/>
<dbReference type="PDBsum" id="5JUO"/>
<dbReference type="PDBsum" id="5JUP"/>
<dbReference type="PDBsum" id="5JUS"/>
<dbReference type="PDBsum" id="5JUT"/>
<dbReference type="PDBsum" id="5JUU"/>
<dbReference type="PDBsum" id="5LYB"/>
<dbReference type="PDBsum" id="5M1J"/>
<dbReference type="PDBsum" id="5MC6"/>
<dbReference type="PDBsum" id="5MEI"/>
<dbReference type="PDBsum" id="5NDG"/>
<dbReference type="PDBsum" id="5NDV"/>
<dbReference type="PDBsum" id="5NDW"/>
<dbReference type="PDBsum" id="5OBM"/>
<dbReference type="PDBsum" id="5ON6"/>
<dbReference type="PDBsum" id="5T62"/>
<dbReference type="PDBsum" id="5T6R"/>
<dbReference type="PDBsum" id="5TBW"/>
<dbReference type="PDBsum" id="5TGA"/>
<dbReference type="PDBsum" id="5TGM"/>
<dbReference type="PDBsum" id="5Z3G"/>
<dbReference type="PDBsum" id="6C0F"/>
<dbReference type="PDBsum" id="6CB1"/>
<dbReference type="PDBsum" id="6ELZ"/>
<dbReference type="PDBsum" id="6EM1"/>
<dbReference type="PDBsum" id="6EM3"/>
<dbReference type="PDBsum" id="6EM4"/>
<dbReference type="PDBsum" id="6EM5"/>
<dbReference type="PDBsum" id="6FT6"/>
<dbReference type="PDBsum" id="6GQ1"/>
<dbReference type="PDBsum" id="6GQB"/>
<dbReference type="PDBsum" id="6GQV"/>
<dbReference type="PDBsum" id="6HD7"/>
<dbReference type="PDBsum" id="6HHQ"/>
<dbReference type="PDBsum" id="6I7O"/>
<dbReference type="PDBsum" id="6M62"/>
<dbReference type="PDBsum" id="6N8J"/>
<dbReference type="PDBsum" id="6N8K"/>
<dbReference type="PDBsum" id="6N8L"/>
<dbReference type="PDBsum" id="6N8M"/>
<dbReference type="PDBsum" id="6N8N"/>
<dbReference type="PDBsum" id="6N8O"/>
<dbReference type="PDBsum" id="6OIG"/>
<dbReference type="PDBsum" id="6Q8Y"/>
<dbReference type="PDBsum" id="6QIK"/>
<dbReference type="PDBsum" id="6QT0"/>
<dbReference type="PDBsum" id="6QTZ"/>
<dbReference type="PDBsum" id="6R84"/>
<dbReference type="PDBsum" id="6R86"/>
<dbReference type="PDBsum" id="6R87"/>
<dbReference type="PDBsum" id="6RI5"/>
<dbReference type="PDBsum" id="6RZZ"/>
<dbReference type="PDBsum" id="6S05"/>
<dbReference type="PDBsum" id="6S47"/>
<dbReference type="PDBsum" id="6SNT"/>
<dbReference type="PDBsum" id="6SV4"/>
<dbReference type="PDBsum" id="6T4Q"/>
<dbReference type="PDBsum" id="6T7I"/>
<dbReference type="PDBsum" id="6T7T"/>
<dbReference type="PDBsum" id="6T83"/>
<dbReference type="PDBsum" id="6TB3"/>
<dbReference type="PDBsum" id="6TNU"/>
<dbReference type="PDBsum" id="6WOO"/>
<dbReference type="PDBsum" id="6YLG"/>
<dbReference type="PDBsum" id="6YLH"/>
<dbReference type="PDBsum" id="6YLX"/>
<dbReference type="PDBsum" id="6YLY"/>
<dbReference type="PDBsum" id="6Z6J"/>
<dbReference type="PDBsum" id="6Z6K"/>
<dbReference type="PDBsum" id="7AZY"/>
<dbReference type="PDBsum" id="7B7D"/>
<dbReference type="PDBsum" id="7BT6"/>
<dbReference type="PDBsum" id="7BTB"/>
<dbReference type="PDBsum" id="7MPI"/>
<dbReference type="PDBsum" id="7MPJ"/>
<dbReference type="PDBsum" id="7N8B"/>
<dbReference type="PDBsum" id="7NAC"/>
<dbReference type="PDBsum" id="7NRC"/>
<dbReference type="PDBsum" id="7NRD"/>
<dbReference type="PDBsum" id="7OF1"/>
<dbReference type="PDBsum" id="7OH3"/>
<dbReference type="PDBsum" id="7OHP"/>
<dbReference type="PDBsum" id="7OHQ"/>
<dbReference type="PDBsum" id="7OHR"/>
<dbReference type="PDBsum" id="7OHS"/>
<dbReference type="PDBsum" id="7OHT"/>
<dbReference type="PDBsum" id="7OHU"/>
<dbReference type="PDBsum" id="7OHV"/>
<dbReference type="PDBsum" id="7OHW"/>
<dbReference type="PDBsum" id="7OHX"/>
<dbReference type="PDBsum" id="7OHY"/>
<dbReference type="PDBsum" id="7R7A"/>
<dbReference type="PDBsum" id="7U0H"/>
<dbReference type="PDBsum" id="7UG6"/>
<dbReference type="PDBsum" id="7UOO"/>
<dbReference type="PDBsum" id="7UQB"/>
<dbReference type="PDBsum" id="7UQZ"/>
<dbReference type="PDBsum" id="7V08"/>
<dbReference type="PDBsum" id="7Z34"/>
<dbReference type="PDBsum" id="7ZPQ"/>
<dbReference type="PDBsum" id="7ZRS"/>
<dbReference type="PDBsum" id="7ZS5"/>
<dbReference type="PDBsum" id="7ZUW"/>
<dbReference type="PDBsum" id="7ZUX"/>
<dbReference type="PDBsum" id="7ZW0"/>
<dbReference type="PDBsum" id="8AAF"/>
<dbReference type="PDBsum" id="8AGT"/>
<dbReference type="PDBsum" id="8AGU"/>
<dbReference type="PDBsum" id="8AGV"/>
<dbReference type="PDBsum" id="8AGW"/>
<dbReference type="PDBsum" id="8AGX"/>
<dbReference type="PDBsum" id="8AGZ"/>
<dbReference type="PDBsum" id="8BIP"/>
<dbReference type="PDBsum" id="8BJQ"/>
<dbReference type="PDBsum" id="8BN3"/>
<dbReference type="PDBsum" id="8BQD"/>
<dbReference type="PDBsum" id="8BQX"/>
<dbReference type="PDBsum" id="8CCS"/>
<dbReference type="PDBsum" id="8CDL"/>
<dbReference type="PDBsum" id="8CDR"/>
<dbReference type="PDBsum" id="8CEH"/>
<dbReference type="PDBsum" id="8CF5"/>
<dbReference type="PDBsum" id="8CG8"/>
<dbReference type="PDBsum" id="8CGN"/>
<dbReference type="PDBsum" id="8CIV"/>
<dbReference type="PDBsum" id="8CKU"/>
<dbReference type="PDBsum" id="8CMJ"/>
<dbReference type="PDBsum" id="8E5T"/>
<dbReference type="PDBsum" id="8HFR"/>
<dbReference type="PDBsum" id="8K2D"/>
<dbReference type="PDBsum" id="8K82"/>
<dbReference type="PDBsum" id="8P4V"/>
<dbReference type="PDBsum" id="8P8M"/>
<dbReference type="PDBsum" id="8P8N"/>
<dbReference type="PDBsum" id="8P8U"/>
<dbReference type="PDBsum" id="8P9A"/>
<dbReference type="PDBsum" id="8PFR"/>
<dbReference type="PDBsum" id="8T2X"/>
<dbReference type="PDBsum" id="8T2Y"/>
<dbReference type="PDBsum" id="8T2Z"/>
<dbReference type="PDBsum" id="8T30"/>
<dbReference type="PDBsum" id="8T3A"/>
<dbReference type="PDBsum" id="8T3B"/>
<dbReference type="PDBsum" id="8T3C"/>
<dbReference type="PDBsum" id="8T3D"/>
<dbReference type="PDBsum" id="8T3E"/>
<dbReference type="PDBsum" id="8T3F"/>
<dbReference type="PDBsum" id="8UT0"/>
<dbReference type="PDBsum" id="8UTI"/>
<dbReference type="PDBsum" id="8V83"/>
<dbReference type="PDBsum" id="8V84"/>
<dbReference type="PDBsum" id="8V87"/>
<dbReference type="PDBsum" id="8XU8"/>
<dbReference type="PDBsum" id="8Y0U"/>
<dbReference type="PDBsum" id="8YLD"/>
<dbReference type="PDBsum" id="8YLR"/>
<dbReference type="PDBsum" id="8Z70"/>
<dbReference type="PDBsum" id="8Z71"/>
<dbReference type="PDBsum" id="9F9S"/>
<dbReference type="EMDB" id="EMD-0369"/>
<dbReference type="EMDB" id="EMD-0370"/>
<dbReference type="EMDB" id="EMD-0371"/>
<dbReference type="EMDB" id="EMD-0372"/>
<dbReference type="EMDB" id="EMD-0373"/>
<dbReference type="EMDB" id="EMD-10068"/>
<dbReference type="EMDB" id="EMD-10071"/>
<dbReference type="EMDB" id="EMD-10315"/>
<dbReference type="EMDB" id="EMD-10377"/>
<dbReference type="EMDB" id="EMD-10396"/>
<dbReference type="EMDB" id="EMD-10397"/>
<dbReference type="EMDB" id="EMD-10398"/>
<dbReference type="EMDB" id="EMD-10431"/>
<dbReference type="EMDB" id="EMD-10537"/>
<dbReference type="EMDB" id="EMD-10841"/>
<dbReference type="EMDB" id="EMD-10842"/>
<dbReference type="EMDB" id="EMD-11096"/>
<dbReference type="EMDB" id="EMD-11097"/>
<dbReference type="EMDB" id="EMD-11951"/>
<dbReference type="EMDB" id="EMD-12866"/>
<dbReference type="EMDB" id="EMD-12892"/>
<dbReference type="EMDB" id="EMD-12904"/>
<dbReference type="EMDB" id="EMD-12905"/>
<dbReference type="EMDB" id="EMD-12906"/>
<dbReference type="EMDB" id="EMD-12907"/>
<dbReference type="EMDB" id="EMD-12908"/>
<dbReference type="EMDB" id="EMD-12909"/>
<dbReference type="EMDB" id="EMD-12910"/>
<dbReference type="EMDB" id="EMD-12911"/>
<dbReference type="EMDB" id="EMD-12912"/>
<dbReference type="EMDB" id="EMD-12913"/>
<dbReference type="EMDB" id="EMD-14471"/>
<dbReference type="EMDB" id="EMD-14926"/>
<dbReference type="EMDB" id="EMD-14979"/>
<dbReference type="EMDB" id="EMD-14990"/>
<dbReference type="EMDB" id="EMD-15296"/>
<dbReference type="EMDB" id="EMD-15423"/>
<dbReference type="EMDB" id="EMD-15424"/>
<dbReference type="EMDB" id="EMD-15425"/>
<dbReference type="EMDB" id="EMD-15426"/>
<dbReference type="EMDB" id="EMD-15427"/>
<dbReference type="EMDB" id="EMD-15428"/>
<dbReference type="EMDB" id="EMD-16086"/>
<dbReference type="EMDB" id="EMD-16090"/>
<dbReference type="EMDB" id="EMD-16563"/>
<dbReference type="EMDB" id="EMD-16591"/>
<dbReference type="EMDB" id="EMD-16594"/>
<dbReference type="EMDB" id="EMD-16609"/>
<dbReference type="EMDB" id="EMD-16616"/>
<dbReference type="EMDB" id="EMD-16634"/>
<dbReference type="EMDB" id="EMD-16648"/>
<dbReference type="EMDB" id="EMD-16684"/>
<dbReference type="EMDB" id="EMD-16702"/>
<dbReference type="EMDB" id="EMD-16729"/>
<dbReference type="EMDB" id="EMD-17549"/>
<dbReference type="EMDB" id="EMD-17550"/>
<dbReference type="EMDB" id="EMD-17552"/>
<dbReference type="EMDB" id="EMD-17653"/>
<dbReference type="EMDB" id="EMD-20077"/>
<dbReference type="EMDB" id="EMD-21859"/>
<dbReference type="EMDB" id="EMD-23934"/>
<dbReference type="EMDB" id="EMD-23935"/>
<dbReference type="EMDB" id="EMD-24235"/>
<dbReference type="EMDB" id="EMD-24269"/>
<dbReference type="EMDB" id="EMD-24296"/>
<dbReference type="EMDB" id="EMD-26259"/>
<dbReference type="EMDB" id="EMD-26485"/>
<dbReference type="EMDB" id="EMD-26651"/>
<dbReference type="EMDB" id="EMD-26686"/>
<dbReference type="EMDB" id="EMD-26703"/>
<dbReference type="EMDB" id="EMD-26941"/>
<dbReference type="EMDB" id="EMD-27919"/>
<dbReference type="EMDB" id="EMD-30108"/>
<dbReference type="EMDB" id="EMD-30170"/>
<dbReference type="EMDB" id="EMD-30174"/>
<dbReference type="EMDB" id="EMD-34725"/>
<dbReference type="EMDB" id="EMD-36839"/>
<dbReference type="EMDB" id="EMD-36945"/>
<dbReference type="EMDB" id="EMD-38660"/>
<dbReference type="EMDB" id="EMD-4140"/>
<dbReference type="EMDB" id="EMD-42525"/>
<dbReference type="EMDB" id="EMD-42540"/>
<dbReference type="EMDB" id="EMD-43017"/>
<dbReference type="EMDB" id="EMD-4302"/>
<dbReference type="EMDB" id="EMD-43021"/>
<dbReference type="EMDB" id="EMD-43027"/>
<dbReference type="EMDB" id="EMD-4427"/>
<dbReference type="EMDB" id="EMD-4474"/>
<dbReference type="EMDB" id="EMD-4560"/>
<dbReference type="EMDB" id="EMD-4630"/>
<dbReference type="EMDB" id="EMD-4636"/>
<dbReference type="EMDB" id="EMD-4751"/>
<dbReference type="EMDB" id="EMD-4752"/>
<dbReference type="EMDB" id="EMD-4753"/>
<dbReference type="EMDB" id="EMD-4884"/>
<dbReference type="EMDB" id="EMD-50259"/>
<dbReference type="EMDB" id="EMD-6878"/>
<dbReference type="EMDB" id="EMD-7324"/>
<dbReference type="EMDB" id="EMD-8362"/>
<dbReference type="EMDB" id="EMD-8368"/>
<dbReference type="SMR" id="P38061"/>
<dbReference type="BioGRID" id="32611">
    <property type="interactions" value="184"/>
</dbReference>
<dbReference type="ComplexPortal" id="CPX-1601">
    <property type="entry name" value="60S cytosolic large ribosomal subunit"/>
</dbReference>
<dbReference type="DIP" id="DIP-5176N"/>
<dbReference type="FunCoup" id="P38061">
    <property type="interactions" value="1249"/>
</dbReference>
<dbReference type="IntAct" id="P38061">
    <property type="interactions" value="99"/>
</dbReference>
<dbReference type="MINT" id="P38061"/>
<dbReference type="STRING" id="4932.YBL092W"/>
<dbReference type="CarbonylDB" id="P38061"/>
<dbReference type="iPTMnet" id="P38061"/>
<dbReference type="PaxDb" id="4932-YBL092W"/>
<dbReference type="PeptideAtlas" id="P38061"/>
<dbReference type="TopDownProteomics" id="P38061"/>
<dbReference type="EnsemblFungi" id="YBL092W_mRNA">
    <property type="protein sequence ID" value="YBL092W"/>
    <property type="gene ID" value="YBL092W"/>
</dbReference>
<dbReference type="GeneID" id="852185"/>
<dbReference type="KEGG" id="sce:YBL092W"/>
<dbReference type="AGR" id="SGD:S000000188"/>
<dbReference type="SGD" id="S000000188">
    <property type="gene designation" value="RPL32"/>
</dbReference>
<dbReference type="VEuPathDB" id="FungiDB:YBL092W"/>
<dbReference type="eggNOG" id="KOG0878">
    <property type="taxonomic scope" value="Eukaryota"/>
</dbReference>
<dbReference type="GeneTree" id="ENSGT00940000171258"/>
<dbReference type="HOGENOM" id="CLU_071479_4_0_1"/>
<dbReference type="InParanoid" id="P38061"/>
<dbReference type="OMA" id="HPSGYEE"/>
<dbReference type="OrthoDB" id="268693at2759"/>
<dbReference type="BioCyc" id="YEAST:G3O-28980-MONOMER"/>
<dbReference type="Reactome" id="R-SCE-156827">
    <property type="pathway name" value="L13a-mediated translational silencing of Ceruloplasmin expression"/>
</dbReference>
<dbReference type="Reactome" id="R-SCE-1799339">
    <property type="pathway name" value="SRP-dependent cotranslational protein targeting to membrane"/>
</dbReference>
<dbReference type="Reactome" id="R-SCE-72689">
    <property type="pathway name" value="Formation of a pool of free 40S subunits"/>
</dbReference>
<dbReference type="Reactome" id="R-SCE-72706">
    <property type="pathway name" value="GTP hydrolysis and joining of the 60S ribosomal subunit"/>
</dbReference>
<dbReference type="Reactome" id="R-SCE-975956">
    <property type="pathway name" value="Nonsense Mediated Decay (NMD) independent of the Exon Junction Complex (EJC)"/>
</dbReference>
<dbReference type="Reactome" id="R-SCE-975957">
    <property type="pathway name" value="Nonsense Mediated Decay (NMD) enhanced by the Exon Junction Complex (EJC)"/>
</dbReference>
<dbReference type="BioGRID-ORCS" id="852185">
    <property type="hits" value="8 hits in 10 CRISPR screens"/>
</dbReference>
<dbReference type="PRO" id="PR:P38061"/>
<dbReference type="Proteomes" id="UP000002311">
    <property type="component" value="Chromosome II"/>
</dbReference>
<dbReference type="RNAct" id="P38061">
    <property type="molecule type" value="protein"/>
</dbReference>
<dbReference type="GO" id="GO:0005737">
    <property type="term" value="C:cytoplasm"/>
    <property type="evidence" value="ECO:0000303"/>
    <property type="project" value="ComplexPortal"/>
</dbReference>
<dbReference type="GO" id="GO:0005829">
    <property type="term" value="C:cytosol"/>
    <property type="evidence" value="ECO:0000304"/>
    <property type="project" value="Reactome"/>
</dbReference>
<dbReference type="GO" id="GO:0022625">
    <property type="term" value="C:cytosolic large ribosomal subunit"/>
    <property type="evidence" value="ECO:0000314"/>
    <property type="project" value="SGD"/>
</dbReference>
<dbReference type="GO" id="GO:0003735">
    <property type="term" value="F:structural constituent of ribosome"/>
    <property type="evidence" value="ECO:0000305"/>
    <property type="project" value="SGD"/>
</dbReference>
<dbReference type="GO" id="GO:0002181">
    <property type="term" value="P:cytoplasmic translation"/>
    <property type="evidence" value="ECO:0000303"/>
    <property type="project" value="ComplexPortal"/>
</dbReference>
<dbReference type="CDD" id="cd00513">
    <property type="entry name" value="Ribosomal_L32_L32e"/>
    <property type="match status" value="1"/>
</dbReference>
<dbReference type="InterPro" id="IPR001515">
    <property type="entry name" value="Ribosomal_eL32"/>
</dbReference>
<dbReference type="InterPro" id="IPR018263">
    <property type="entry name" value="Ribosomal_eL32_CS"/>
</dbReference>
<dbReference type="InterPro" id="IPR036351">
    <property type="entry name" value="Ribosomal_eL32_sf"/>
</dbReference>
<dbReference type="PANTHER" id="PTHR23413">
    <property type="entry name" value="60S RIBOSOMAL PROTEIN L32 AND DNA-DIRECTED RNA POLYMERASE II, SUBUNIT N"/>
    <property type="match status" value="1"/>
</dbReference>
<dbReference type="PANTHER" id="PTHR23413:SF1">
    <property type="entry name" value="RIBOSOMAL PROTEIN L32"/>
    <property type="match status" value="1"/>
</dbReference>
<dbReference type="Pfam" id="PF01655">
    <property type="entry name" value="Ribosomal_L32e"/>
    <property type="match status" value="1"/>
</dbReference>
<dbReference type="SMART" id="SM01393">
    <property type="entry name" value="Ribosomal_L32e"/>
    <property type="match status" value="1"/>
</dbReference>
<dbReference type="SUPFAM" id="SSF52042">
    <property type="entry name" value="Ribosomal protein L32e"/>
    <property type="match status" value="1"/>
</dbReference>
<dbReference type="PROSITE" id="PS00580">
    <property type="entry name" value="RIBOSOMAL_L32E"/>
    <property type="match status" value="1"/>
</dbReference>
<reference key="1">
    <citation type="journal article" date="1995" name="Yeast">
        <title>Sequence analysis of a 78.6 kb segment of the left end of Saccharomyces cerevisiae chromosome II.</title>
        <authorList>
            <person name="Obermaier B."/>
            <person name="Gassenhuber J."/>
            <person name="Piravandi E."/>
            <person name="Domdey H."/>
        </authorList>
    </citation>
    <scope>NUCLEOTIDE SEQUENCE [GENOMIC DNA]</scope>
    <source>
        <strain>ATCC 204508 / S288c</strain>
    </source>
</reference>
<reference key="2">
    <citation type="journal article" date="1994" name="EMBO J.">
        <title>Complete DNA sequence of yeast chromosome II.</title>
        <authorList>
            <person name="Feldmann H."/>
            <person name="Aigle M."/>
            <person name="Aljinovic G."/>
            <person name="Andre B."/>
            <person name="Baclet M.C."/>
            <person name="Barthe C."/>
            <person name="Baur A."/>
            <person name="Becam A.-M."/>
            <person name="Biteau N."/>
            <person name="Boles E."/>
            <person name="Brandt T."/>
            <person name="Brendel M."/>
            <person name="Brueckner M."/>
            <person name="Bussereau F."/>
            <person name="Christiansen C."/>
            <person name="Contreras R."/>
            <person name="Crouzet M."/>
            <person name="Cziepluch C."/>
            <person name="Demolis N."/>
            <person name="Delaveau T."/>
            <person name="Doignon F."/>
            <person name="Domdey H."/>
            <person name="Duesterhus S."/>
            <person name="Dubois E."/>
            <person name="Dujon B."/>
            <person name="El Bakkoury M."/>
            <person name="Entian K.-D."/>
            <person name="Feuermann M."/>
            <person name="Fiers W."/>
            <person name="Fobo G.M."/>
            <person name="Fritz C."/>
            <person name="Gassenhuber J."/>
            <person name="Glansdorff N."/>
            <person name="Goffeau A."/>
            <person name="Grivell L.A."/>
            <person name="de Haan M."/>
            <person name="Hein C."/>
            <person name="Herbert C.J."/>
            <person name="Hollenberg C.P."/>
            <person name="Holmstroem K."/>
            <person name="Jacq C."/>
            <person name="Jacquet M."/>
            <person name="Jauniaux J.-C."/>
            <person name="Jonniaux J.-L."/>
            <person name="Kallesoee T."/>
            <person name="Kiesau P."/>
            <person name="Kirchrath L."/>
            <person name="Koetter P."/>
            <person name="Korol S."/>
            <person name="Liebl S."/>
            <person name="Logghe M."/>
            <person name="Lohan A.J.E."/>
            <person name="Louis E.J."/>
            <person name="Li Z.Y."/>
            <person name="Maat M.J."/>
            <person name="Mallet L."/>
            <person name="Mannhaupt G."/>
            <person name="Messenguy F."/>
            <person name="Miosga T."/>
            <person name="Molemans F."/>
            <person name="Mueller S."/>
            <person name="Nasr F."/>
            <person name="Obermaier B."/>
            <person name="Perea J."/>
            <person name="Pierard A."/>
            <person name="Piravandi E."/>
            <person name="Pohl F.M."/>
            <person name="Pohl T.M."/>
            <person name="Potier S."/>
            <person name="Proft M."/>
            <person name="Purnelle B."/>
            <person name="Ramezani Rad M."/>
            <person name="Rieger M."/>
            <person name="Rose M."/>
            <person name="Schaaff-Gerstenschlaeger I."/>
            <person name="Scherens B."/>
            <person name="Schwarzlose C."/>
            <person name="Skala J."/>
            <person name="Slonimski P.P."/>
            <person name="Smits P.H.M."/>
            <person name="Souciet J.-L."/>
            <person name="Steensma H.Y."/>
            <person name="Stucka R."/>
            <person name="Urrestarazu L.A."/>
            <person name="van der Aart Q.J.M."/>
            <person name="Van Dyck L."/>
            <person name="Vassarotti A."/>
            <person name="Vetter I."/>
            <person name="Vierendeels F."/>
            <person name="Vissers S."/>
            <person name="Wagner G."/>
            <person name="de Wergifosse P."/>
            <person name="Wolfe K.H."/>
            <person name="Zagulski M."/>
            <person name="Zimmermann F.K."/>
            <person name="Mewes H.-W."/>
            <person name="Kleine K."/>
        </authorList>
    </citation>
    <scope>NUCLEOTIDE SEQUENCE [LARGE SCALE GENOMIC DNA]</scope>
    <source>
        <strain>ATCC 204508 / S288c</strain>
    </source>
</reference>
<reference key="3">
    <citation type="journal article" date="2014" name="G3 (Bethesda)">
        <title>The reference genome sequence of Saccharomyces cerevisiae: Then and now.</title>
        <authorList>
            <person name="Engel S.R."/>
            <person name="Dietrich F.S."/>
            <person name="Fisk D.G."/>
            <person name="Binkley G."/>
            <person name="Balakrishnan R."/>
            <person name="Costanzo M.C."/>
            <person name="Dwight S.S."/>
            <person name="Hitz B.C."/>
            <person name="Karra K."/>
            <person name="Nash R.S."/>
            <person name="Weng S."/>
            <person name="Wong E.D."/>
            <person name="Lloyd P."/>
            <person name="Skrzypek M.S."/>
            <person name="Miyasato S.R."/>
            <person name="Simison M."/>
            <person name="Cherry J.M."/>
        </authorList>
    </citation>
    <scope>GENOME REANNOTATION</scope>
    <source>
        <strain>ATCC 204508 / S288c</strain>
    </source>
</reference>
<reference key="4">
    <citation type="journal article" date="2007" name="Genome Res.">
        <title>Approaching a complete repository of sequence-verified protein-encoding clones for Saccharomyces cerevisiae.</title>
        <authorList>
            <person name="Hu Y."/>
            <person name="Rolfs A."/>
            <person name="Bhullar B."/>
            <person name="Murthy T.V.S."/>
            <person name="Zhu C."/>
            <person name="Berger M.F."/>
            <person name="Camargo A.A."/>
            <person name="Kelley F."/>
            <person name="McCarron S."/>
            <person name="Jepson D."/>
            <person name="Richardson A."/>
            <person name="Raphael J."/>
            <person name="Moreira D."/>
            <person name="Taycher E."/>
            <person name="Zuo D."/>
            <person name="Mohr S."/>
            <person name="Kane M.F."/>
            <person name="Williamson J."/>
            <person name="Simpson A.J.G."/>
            <person name="Bulyk M.L."/>
            <person name="Harlow E."/>
            <person name="Marsischky G."/>
            <person name="Kolodner R.D."/>
            <person name="LaBaer J."/>
        </authorList>
    </citation>
    <scope>NUCLEOTIDE SEQUENCE [GENOMIC DNA]</scope>
    <source>
        <strain>ATCC 204508 / S288c</strain>
    </source>
</reference>
<reference key="5">
    <citation type="journal article" date="2007" name="Proc. Natl. Acad. Sci. U.S.A.">
        <title>High-density yeast-tiling array reveals previously undiscovered introns and extensive regulation of meiotic splicing.</title>
        <authorList>
            <person name="Juneau K."/>
            <person name="Palm C."/>
            <person name="Miranda M."/>
            <person name="Davis R.W."/>
        </authorList>
    </citation>
    <scope>NUCLEOTIDE SEQUENCE [MRNA] OF 1-76</scope>
    <source>
        <strain>ATCC 201390 / BY4743</strain>
    </source>
</reference>
<reference key="6">
    <citation type="journal article" date="1998" name="Yeast">
        <title>The list of cytoplasmic ribosomal proteins of Saccharomyces cerevisiae.</title>
        <authorList>
            <person name="Planta R.J."/>
            <person name="Mager W.H."/>
        </authorList>
    </citation>
    <scope>NOMENCLATURE</scope>
    <scope>SUBUNIT</scope>
</reference>
<reference key="7">
    <citation type="journal article" date="1999" name="J. Biol. Chem.">
        <title>The action of N-terminal acetyltransferases on yeast ribosomal proteins.</title>
        <authorList>
            <person name="Arnold R.J."/>
            <person name="Polevoda B."/>
            <person name="Reilly J.P."/>
            <person name="Sherman F."/>
        </authorList>
    </citation>
    <scope>CLEAVAGE OF INITIATOR METHIONINE</scope>
</reference>
<reference key="8">
    <citation type="journal article" date="2007" name="Proc. Natl. Acad. Sci. U.S.A.">
        <title>Analysis of phosphorylation sites on proteins from Saccharomyces cerevisiae by electron transfer dissociation (ETD) mass spectrometry.</title>
        <authorList>
            <person name="Chi A."/>
            <person name="Huttenhower C."/>
            <person name="Geer L.Y."/>
            <person name="Coon J.J."/>
            <person name="Syka J.E.P."/>
            <person name="Bai D.L."/>
            <person name="Shabanowitz J."/>
            <person name="Burke D.J."/>
            <person name="Troyanskaya O.G."/>
            <person name="Hunt D.F."/>
        </authorList>
    </citation>
    <scope>PHOSPHORYLATION [LARGE SCALE ANALYSIS] AT SER-40</scope>
    <scope>IDENTIFICATION BY MASS SPECTROMETRY [LARGE SCALE ANALYSIS]</scope>
</reference>
<reference key="9">
    <citation type="journal article" date="2014" name="Curr. Opin. Struct. Biol.">
        <title>A new system for naming ribosomal proteins.</title>
        <authorList>
            <person name="Ban N."/>
            <person name="Beckmann R."/>
            <person name="Cate J.H.D."/>
            <person name="Dinman J.D."/>
            <person name="Dragon F."/>
            <person name="Ellis S.R."/>
            <person name="Lafontaine D.L.J."/>
            <person name="Lindahl L."/>
            <person name="Liljas A."/>
            <person name="Lipton J.M."/>
            <person name="McAlear M.A."/>
            <person name="Moore P.B."/>
            <person name="Noller H.F."/>
            <person name="Ortega J."/>
            <person name="Panse V.G."/>
            <person name="Ramakrishnan V."/>
            <person name="Spahn C.M.T."/>
            <person name="Steitz T.A."/>
            <person name="Tchorzewski M."/>
            <person name="Tollervey D."/>
            <person name="Warren A.J."/>
            <person name="Williamson J.R."/>
            <person name="Wilson D."/>
            <person name="Yonath A."/>
            <person name="Yusupov M."/>
        </authorList>
    </citation>
    <scope>NOMENCLATURE</scope>
</reference>
<reference key="10">
    <citation type="journal article" date="2001" name="Cell">
        <title>Structure of the 80S ribosome from Saccharomyces cerevisiae -- tRNA-ribosome and subunit-subunit interactions.</title>
        <authorList>
            <person name="Spahn C.M.T."/>
            <person name="Beckmann R."/>
            <person name="Eswar N."/>
            <person name="Penczek P.A."/>
            <person name="Sali A."/>
            <person name="Blobel G."/>
            <person name="Frank J."/>
        </authorList>
    </citation>
    <scope>3D-STRUCTURE MODELING OF 14-122</scope>
    <scope>ELECTRON MICROSCOPY</scope>
</reference>
<reference key="11">
    <citation type="journal article" date="2004" name="EMBO J.">
        <title>Domain movements of elongation factor eEF2 and the eukaryotic 80S ribosome facilitate tRNA translocation.</title>
        <authorList>
            <person name="Spahn C.M.T."/>
            <person name="Gomez-Lorenzo M.G."/>
            <person name="Grassucci R.A."/>
            <person name="Joergensen R."/>
            <person name="Andersen G.R."/>
            <person name="Beckmann R."/>
            <person name="Penczek P.A."/>
            <person name="Ballesta J.P.G."/>
            <person name="Frank J."/>
        </authorList>
    </citation>
    <scope>3D-STRUCTURE MODELING</scope>
    <scope>ELECTRON MICROSCOPY</scope>
</reference>
<reference key="12">
    <citation type="journal article" date="2010" name="Science">
        <title>Crystal structure of the eukaryotic ribosome.</title>
        <authorList>
            <person name="Ben-Shem A."/>
            <person name="Jenner L."/>
            <person name="Yusupova G."/>
            <person name="Yusupov M."/>
        </authorList>
    </citation>
    <scope>X-RAY CRYSTALLOGRAPHY (4.0 ANGSTROMS) OF 80S RIBOSOME</scope>
</reference>
<reference key="13">
    <citation type="journal article" date="2011" name="Science">
        <title>The structure of the eukaryotic ribosome at 3.0 A resolution.</title>
        <authorList>
            <person name="Ben-Shem A."/>
            <person name="Garreau de Loubresse N."/>
            <person name="Melnikov S."/>
            <person name="Jenner L."/>
            <person name="Yusupova G."/>
            <person name="Yusupov M."/>
        </authorList>
    </citation>
    <scope>X-RAY CRYSTALLOGRAPHY (3.0 ANGSTROMS) OF 80S RIBOSOME</scope>
    <scope>SUBUNIT</scope>
    <scope>SUBCELLULAR LOCATION</scope>
</reference>
<keyword id="KW-0002">3D-structure</keyword>
<keyword id="KW-0963">Cytoplasm</keyword>
<keyword id="KW-0597">Phosphoprotein</keyword>
<keyword id="KW-1185">Reference proteome</keyword>
<keyword id="KW-0687">Ribonucleoprotein</keyword>
<keyword id="KW-0689">Ribosomal protein</keyword>
<accession>P38061</accession>
<accession>A2TBM1</accession>
<accession>D6VPR1</accession>
<organism>
    <name type="scientific">Saccharomyces cerevisiae (strain ATCC 204508 / S288c)</name>
    <name type="common">Baker's yeast</name>
    <dbReference type="NCBI Taxonomy" id="559292"/>
    <lineage>
        <taxon>Eukaryota</taxon>
        <taxon>Fungi</taxon>
        <taxon>Dikarya</taxon>
        <taxon>Ascomycota</taxon>
        <taxon>Saccharomycotina</taxon>
        <taxon>Saccharomycetes</taxon>
        <taxon>Saccharomycetales</taxon>
        <taxon>Saccharomycetaceae</taxon>
        <taxon>Saccharomyces</taxon>
    </lineage>
</organism>